<reference key="1">
    <citation type="journal article" date="2002" name="Proc. Natl. Acad. Sci. U.S.A.">
        <title>The genome sequence of the facultative intracellular pathogen Brucella melitensis.</title>
        <authorList>
            <person name="DelVecchio V.G."/>
            <person name="Kapatral V."/>
            <person name="Redkar R.J."/>
            <person name="Patra G."/>
            <person name="Mujer C."/>
            <person name="Los T."/>
            <person name="Ivanova N."/>
            <person name="Anderson I."/>
            <person name="Bhattacharyya A."/>
            <person name="Lykidis A."/>
            <person name="Reznik G."/>
            <person name="Jablonski L."/>
            <person name="Larsen N."/>
            <person name="D'Souza M."/>
            <person name="Bernal A."/>
            <person name="Mazur M."/>
            <person name="Goltsman E."/>
            <person name="Selkov E."/>
            <person name="Elzer P.H."/>
            <person name="Hagius S."/>
            <person name="O'Callaghan D."/>
            <person name="Letesson J.-J."/>
            <person name="Haselkorn R."/>
            <person name="Kyrpides N.C."/>
            <person name="Overbeek R."/>
        </authorList>
    </citation>
    <scope>NUCLEOTIDE SEQUENCE [LARGE SCALE GENOMIC DNA]</scope>
    <source>
        <strain>ATCC 23456 / CCUG 17765 / NCTC 10094 / 16M</strain>
    </source>
</reference>
<comment type="function">
    <text evidence="1">Catalyzes the dehydration of D-mannonate.</text>
</comment>
<comment type="catalytic activity">
    <reaction evidence="1">
        <text>D-mannonate = 2-dehydro-3-deoxy-D-gluconate + H2O</text>
        <dbReference type="Rhea" id="RHEA:20097"/>
        <dbReference type="ChEBI" id="CHEBI:15377"/>
        <dbReference type="ChEBI" id="CHEBI:17767"/>
        <dbReference type="ChEBI" id="CHEBI:57990"/>
        <dbReference type="EC" id="4.2.1.8"/>
    </reaction>
</comment>
<comment type="cofactor">
    <cofactor evidence="1">
        <name>Fe(2+)</name>
        <dbReference type="ChEBI" id="CHEBI:29033"/>
    </cofactor>
    <cofactor evidence="1">
        <name>Mn(2+)</name>
        <dbReference type="ChEBI" id="CHEBI:29035"/>
    </cofactor>
</comment>
<comment type="pathway">
    <text evidence="1">Carbohydrate metabolism; pentose and glucuronate interconversion.</text>
</comment>
<comment type="similarity">
    <text evidence="1">Belongs to the mannonate dehydratase family.</text>
</comment>
<accession>Q8YCQ4</accession>
<keyword id="KW-0408">Iron</keyword>
<keyword id="KW-0456">Lyase</keyword>
<keyword id="KW-0464">Manganese</keyword>
<evidence type="ECO:0000255" key="1">
    <source>
        <dbReference type="HAMAP-Rule" id="MF_00106"/>
    </source>
</evidence>
<protein>
    <recommendedName>
        <fullName evidence="1">Mannonate dehydratase</fullName>
        <ecNumber evidence="1">4.2.1.8</ecNumber>
    </recommendedName>
    <alternativeName>
        <fullName evidence="1">D-mannonate hydro-lyase</fullName>
    </alternativeName>
</protein>
<feature type="chain" id="PRO_0000170666" description="Mannonate dehydratase">
    <location>
        <begin position="1"/>
        <end position="401"/>
    </location>
</feature>
<sequence>MRQAWRWFGPEAGVPLDAVRQAGATDIVSALHEVPIGQEWTSAQIVERKNLIESTPTGRHPLTWSVVESIPVSDDIKRSGKAARHDIGAWIASMEALARNDIKVICYNFMPVVDWCRTDLDYITSTGATAMRFDQDRFAAFDLHILRRKGAEKDYSEEDRIAARAIFEAMDETEIEQLIVNIASALPGSTTEPLTIPAFRKKLETYASIDAAHLRRNLVEFLEAVTPVADSLGVKLTLHPDDPPRSLFGLPRIASTEADYAAIFAAVPAQSNGMCFCTGSLGVRADNDLPAIARRFASRIHFSHLRATTREGDGRTFHEAAHLEGDVDMVGILRILLEEDRKRDAGQTIIFRSDHGHRMMDDLEKKVTPGYPVIGRMRGLAELRGIITALDACALEYDPNV</sequence>
<name>UXUA_BRUME</name>
<organism>
    <name type="scientific">Brucella melitensis biotype 1 (strain ATCC 23456 / CCUG 17765 / NCTC 10094 / 16M)</name>
    <dbReference type="NCBI Taxonomy" id="224914"/>
    <lineage>
        <taxon>Bacteria</taxon>
        <taxon>Pseudomonadati</taxon>
        <taxon>Pseudomonadota</taxon>
        <taxon>Alphaproteobacteria</taxon>
        <taxon>Hyphomicrobiales</taxon>
        <taxon>Brucellaceae</taxon>
        <taxon>Brucella/Ochrobactrum group</taxon>
        <taxon>Brucella</taxon>
    </lineage>
</organism>
<dbReference type="EC" id="4.2.1.8" evidence="1"/>
<dbReference type="EMBL" id="AE008918">
    <property type="protein sequence ID" value="AAL53716.1"/>
    <property type="molecule type" value="Genomic_DNA"/>
</dbReference>
<dbReference type="PIR" id="AI3568">
    <property type="entry name" value="AI3568"/>
</dbReference>
<dbReference type="RefSeq" id="WP_004682164.1">
    <property type="nucleotide sequence ID" value="NZ_GG703779.1"/>
</dbReference>
<dbReference type="SMR" id="Q8YCQ4"/>
<dbReference type="GeneID" id="29595241"/>
<dbReference type="KEGG" id="bme:BMEII0474"/>
<dbReference type="KEGG" id="bmel:DK63_2767"/>
<dbReference type="PATRIC" id="fig|224914.52.peg.2897"/>
<dbReference type="eggNOG" id="COG1312">
    <property type="taxonomic scope" value="Bacteria"/>
</dbReference>
<dbReference type="PhylomeDB" id="Q8YCQ4"/>
<dbReference type="UniPathway" id="UPA00246"/>
<dbReference type="Proteomes" id="UP000000419">
    <property type="component" value="Chromosome II"/>
</dbReference>
<dbReference type="GO" id="GO:0008198">
    <property type="term" value="F:ferrous iron binding"/>
    <property type="evidence" value="ECO:0007669"/>
    <property type="project" value="TreeGrafter"/>
</dbReference>
<dbReference type="GO" id="GO:0030145">
    <property type="term" value="F:manganese ion binding"/>
    <property type="evidence" value="ECO:0007669"/>
    <property type="project" value="TreeGrafter"/>
</dbReference>
<dbReference type="GO" id="GO:0008927">
    <property type="term" value="F:mannonate dehydratase activity"/>
    <property type="evidence" value="ECO:0007669"/>
    <property type="project" value="UniProtKB-UniRule"/>
</dbReference>
<dbReference type="GO" id="GO:0042840">
    <property type="term" value="P:D-glucuronate catabolic process"/>
    <property type="evidence" value="ECO:0007669"/>
    <property type="project" value="TreeGrafter"/>
</dbReference>
<dbReference type="Gene3D" id="3.20.20.150">
    <property type="entry name" value="Divalent-metal-dependent TIM barrel enzymes"/>
    <property type="match status" value="1"/>
</dbReference>
<dbReference type="HAMAP" id="MF_00106">
    <property type="entry name" value="UxuA"/>
    <property type="match status" value="1"/>
</dbReference>
<dbReference type="InterPro" id="IPR004628">
    <property type="entry name" value="Man_deHydtase"/>
</dbReference>
<dbReference type="InterPro" id="IPR036237">
    <property type="entry name" value="Xyl_isomerase-like_sf"/>
</dbReference>
<dbReference type="NCBIfam" id="NF003027">
    <property type="entry name" value="PRK03906.1"/>
    <property type="match status" value="1"/>
</dbReference>
<dbReference type="NCBIfam" id="TIGR00695">
    <property type="entry name" value="uxuA"/>
    <property type="match status" value="1"/>
</dbReference>
<dbReference type="PANTHER" id="PTHR30387">
    <property type="entry name" value="MANNONATE DEHYDRATASE"/>
    <property type="match status" value="1"/>
</dbReference>
<dbReference type="PANTHER" id="PTHR30387:SF2">
    <property type="entry name" value="MANNONATE DEHYDRATASE"/>
    <property type="match status" value="1"/>
</dbReference>
<dbReference type="Pfam" id="PF03786">
    <property type="entry name" value="UxuA"/>
    <property type="match status" value="1"/>
</dbReference>
<dbReference type="PIRSF" id="PIRSF016049">
    <property type="entry name" value="Man_dehyd"/>
    <property type="match status" value="1"/>
</dbReference>
<dbReference type="SUPFAM" id="SSF51658">
    <property type="entry name" value="Xylose isomerase-like"/>
    <property type="match status" value="1"/>
</dbReference>
<proteinExistence type="inferred from homology"/>
<gene>
    <name evidence="1" type="primary">uxuA</name>
    <name type="ordered locus">BMEII0474</name>
</gene>